<protein>
    <recommendedName>
        <fullName evidence="2">Tubby protein homolog 1</fullName>
    </recommendedName>
</protein>
<accession>A8WN62</accession>
<organism>
    <name type="scientific">Caenorhabditis briggsae</name>
    <dbReference type="NCBI Taxonomy" id="6238"/>
    <lineage>
        <taxon>Eukaryota</taxon>
        <taxon>Metazoa</taxon>
        <taxon>Ecdysozoa</taxon>
        <taxon>Nematoda</taxon>
        <taxon>Chromadorea</taxon>
        <taxon>Rhabditida</taxon>
        <taxon>Rhabditina</taxon>
        <taxon>Rhabditomorpha</taxon>
        <taxon>Rhabditoidea</taxon>
        <taxon>Rhabditidae</taxon>
        <taxon>Peloderinae</taxon>
        <taxon>Caenorhabditis</taxon>
    </lineage>
</organism>
<comment type="function">
    <text evidence="2">Has a role in fat regulation independent of daf-16. Implicated in ciliar sensory function which is required for normal sensory behavior such as chemotaxis. Functions in life span control via the insulin/IGF-1 pathway. Thought to be involved in neuronal trafficking (By similarity).</text>
</comment>
<comment type="subunit">
    <text evidence="1">Interacts with rgb-3.</text>
</comment>
<comment type="subcellular location">
    <subcellularLocation>
        <location evidence="2">Cytoplasm</location>
    </subcellularLocation>
    <subcellularLocation>
        <location evidence="2">Cell projection</location>
    </subcellularLocation>
    <subcellularLocation>
        <location evidence="2">Cell projection</location>
        <location evidence="2">Axon</location>
    </subcellularLocation>
    <subcellularLocation>
        <location evidence="2">Cell projection</location>
        <location evidence="2">Dendrite</location>
    </subcellularLocation>
    <subcellularLocation>
        <location evidence="2">Cell projection</location>
        <location evidence="2">Cilium</location>
    </subcellularLocation>
</comment>
<comment type="similarity">
    <text evidence="3">Belongs to the TUB family.</text>
</comment>
<sequence>MSDTNSAWIEQNLQRQRKMLEDKQKQKRHQSAGSVRTTTTTSSMSMNNMKDYPAFETSLPFSMSDHTSNMNTPLIPTPQAPPRNHTLTTRQSSMPATDTLIQINDYPENDISAKLSKVNLTPCVVSDDEDSDRRSYRESPWHNDIVADKIKTDILPDYNYIKNNLQKFVDEPAQEHCLYRCSITRHKSGVDKTMYPTYYLHLEEMDTDKKAKIFLLAARKRKKSTTANYLLSTDPTNLSREGDGYCAKVRSNALGTHFTIYDNGHNPKKTDNQFSIRQELAAVIYETNVLGFKGPRKMTVIMPGIEPGNDSKPAVRCIHRPVLEKHTLLEKNRSGDTNSLKVLTNKSPQWNDETQSYVLNFHGRVTQASVKNFQIIHPNSPEYIVMQFGRVSEDEFTMDFRYPLSAVQAFGIAMTSFHGKLACE</sequence>
<evidence type="ECO:0000250" key="1"/>
<evidence type="ECO:0000250" key="2">
    <source>
        <dbReference type="UniProtKB" id="Q09306"/>
    </source>
</evidence>
<evidence type="ECO:0000255" key="3"/>
<evidence type="ECO:0000256" key="4">
    <source>
        <dbReference type="SAM" id="MobiDB-lite"/>
    </source>
</evidence>
<evidence type="ECO:0000312" key="5">
    <source>
        <dbReference type="EMBL" id="CAP21917.1"/>
    </source>
</evidence>
<evidence type="ECO:0000312" key="6">
    <source>
        <dbReference type="WormBase" id="CBG00741"/>
    </source>
</evidence>
<keyword id="KW-0966">Cell projection</keyword>
<keyword id="KW-0145">Chemotaxis</keyword>
<keyword id="KW-0963">Cytoplasm</keyword>
<keyword id="KW-0443">Lipid metabolism</keyword>
<keyword id="KW-1185">Reference proteome</keyword>
<keyword id="KW-0716">Sensory transduction</keyword>
<gene>
    <name evidence="6" type="primary">tub-1</name>
    <name evidence="6" type="ORF">CBG00741</name>
</gene>
<reference evidence="5" key="1">
    <citation type="journal article" date="2003" name="PLoS Biol.">
        <title>The genome sequence of Caenorhabditis briggsae: a platform for comparative genomics.</title>
        <authorList>
            <person name="Stein L.D."/>
            <person name="Bao Z."/>
            <person name="Blasiar D."/>
            <person name="Blumenthal T."/>
            <person name="Brent M.R."/>
            <person name="Chen N."/>
            <person name="Chinwalla A."/>
            <person name="Clarke L."/>
            <person name="Clee C."/>
            <person name="Coghlan A."/>
            <person name="Coulson A."/>
            <person name="D'Eustachio P."/>
            <person name="Fitch D.H.A."/>
            <person name="Fulton L.A."/>
            <person name="Fulton R.E."/>
            <person name="Griffiths-Jones S."/>
            <person name="Harris T.W."/>
            <person name="Hillier L.W."/>
            <person name="Kamath R."/>
            <person name="Kuwabara P.E."/>
            <person name="Mardis E.R."/>
            <person name="Marra M.A."/>
            <person name="Miner T.L."/>
            <person name="Minx P."/>
            <person name="Mullikin J.C."/>
            <person name="Plumb R.W."/>
            <person name="Rogers J."/>
            <person name="Schein J.E."/>
            <person name="Sohrmann M."/>
            <person name="Spieth J."/>
            <person name="Stajich J.E."/>
            <person name="Wei C."/>
            <person name="Willey D."/>
            <person name="Wilson R.K."/>
            <person name="Durbin R.M."/>
            <person name="Waterston R.H."/>
        </authorList>
    </citation>
    <scope>NUCLEOTIDE SEQUENCE [LARGE SCALE GENOMIC DNA]</scope>
    <source>
        <strain>AF16</strain>
    </source>
</reference>
<dbReference type="EMBL" id="HE600999">
    <property type="protein sequence ID" value="CAP21917.1"/>
    <property type="molecule type" value="Genomic_DNA"/>
</dbReference>
<dbReference type="SMR" id="A8WN62"/>
<dbReference type="FunCoup" id="A8WN62">
    <property type="interactions" value="495"/>
</dbReference>
<dbReference type="STRING" id="6238.A8WN62"/>
<dbReference type="EnsemblMetazoa" id="CBG00741.1">
    <property type="protein sequence ID" value="CBG00741.1"/>
    <property type="gene ID" value="WBGene00024084"/>
</dbReference>
<dbReference type="KEGG" id="cbr:CBG_00741"/>
<dbReference type="CTD" id="8571820"/>
<dbReference type="WormBase" id="CBG00741">
    <property type="protein sequence ID" value="CBP00205"/>
    <property type="gene ID" value="WBGene00024084"/>
    <property type="gene designation" value="Cbr-tub-1"/>
</dbReference>
<dbReference type="eggNOG" id="KOG2502">
    <property type="taxonomic scope" value="Eukaryota"/>
</dbReference>
<dbReference type="HOGENOM" id="CLU_028236_1_1_1"/>
<dbReference type="InParanoid" id="A8WN62"/>
<dbReference type="OMA" id="KSPQWND"/>
<dbReference type="OrthoDB" id="8775810at2759"/>
<dbReference type="Proteomes" id="UP000008549">
    <property type="component" value="Unassembled WGS sequence"/>
</dbReference>
<dbReference type="GO" id="GO:0030424">
    <property type="term" value="C:axon"/>
    <property type="evidence" value="ECO:0007669"/>
    <property type="project" value="UniProtKB-SubCell"/>
</dbReference>
<dbReference type="GO" id="GO:0005929">
    <property type="term" value="C:cilium"/>
    <property type="evidence" value="ECO:0000318"/>
    <property type="project" value="GO_Central"/>
</dbReference>
<dbReference type="GO" id="GO:0005737">
    <property type="term" value="C:cytoplasm"/>
    <property type="evidence" value="ECO:0007669"/>
    <property type="project" value="UniProtKB-SubCell"/>
</dbReference>
<dbReference type="GO" id="GO:0030425">
    <property type="term" value="C:dendrite"/>
    <property type="evidence" value="ECO:0007669"/>
    <property type="project" value="UniProtKB-SubCell"/>
</dbReference>
<dbReference type="GO" id="GO:0097730">
    <property type="term" value="C:non-motile cilium"/>
    <property type="evidence" value="ECO:0007669"/>
    <property type="project" value="EnsemblMetazoa"/>
</dbReference>
<dbReference type="GO" id="GO:1990075">
    <property type="term" value="C:periciliary membrane compartment"/>
    <property type="evidence" value="ECO:0007669"/>
    <property type="project" value="EnsemblMetazoa"/>
</dbReference>
<dbReference type="GO" id="GO:0006935">
    <property type="term" value="P:chemotaxis"/>
    <property type="evidence" value="ECO:0007669"/>
    <property type="project" value="UniProtKB-KW"/>
</dbReference>
<dbReference type="GO" id="GO:0006629">
    <property type="term" value="P:lipid metabolic process"/>
    <property type="evidence" value="ECO:0007669"/>
    <property type="project" value="UniProtKB-KW"/>
</dbReference>
<dbReference type="GO" id="GO:0050769">
    <property type="term" value="P:positive regulation of neurogenesis"/>
    <property type="evidence" value="ECO:0007669"/>
    <property type="project" value="EnsemblMetazoa"/>
</dbReference>
<dbReference type="GO" id="GO:0061512">
    <property type="term" value="P:protein localization to cilium"/>
    <property type="evidence" value="ECO:0000318"/>
    <property type="project" value="GO_Central"/>
</dbReference>
<dbReference type="GO" id="GO:0097500">
    <property type="term" value="P:receptor localization to non-motile cilium"/>
    <property type="evidence" value="ECO:0007669"/>
    <property type="project" value="EnsemblMetazoa"/>
</dbReference>
<dbReference type="Gene3D" id="3.20.90.10">
    <property type="entry name" value="Tubby Protein, Chain A"/>
    <property type="match status" value="1"/>
</dbReference>
<dbReference type="InterPro" id="IPR025659">
    <property type="entry name" value="Tubby-like_C"/>
</dbReference>
<dbReference type="InterPro" id="IPR000007">
    <property type="entry name" value="Tubby_C"/>
</dbReference>
<dbReference type="InterPro" id="IPR018066">
    <property type="entry name" value="Tubby_C_CS"/>
</dbReference>
<dbReference type="PANTHER" id="PTHR16517:SF7">
    <property type="entry name" value="PROTEIN KING TUBBY"/>
    <property type="match status" value="1"/>
</dbReference>
<dbReference type="PANTHER" id="PTHR16517">
    <property type="entry name" value="TUBBY-RELATED"/>
    <property type="match status" value="1"/>
</dbReference>
<dbReference type="Pfam" id="PF01167">
    <property type="entry name" value="Tub"/>
    <property type="match status" value="1"/>
</dbReference>
<dbReference type="PRINTS" id="PR01573">
    <property type="entry name" value="SUPERTUBBY"/>
</dbReference>
<dbReference type="SUPFAM" id="SSF54518">
    <property type="entry name" value="Tubby C-terminal domain-like"/>
    <property type="match status" value="1"/>
</dbReference>
<dbReference type="PROSITE" id="PS01200">
    <property type="entry name" value="TUB_1"/>
    <property type="match status" value="1"/>
</dbReference>
<dbReference type="PROSITE" id="PS01201">
    <property type="entry name" value="TUB_2"/>
    <property type="match status" value="1"/>
</dbReference>
<proteinExistence type="inferred from homology"/>
<feature type="chain" id="PRO_0000397234" description="Tubby protein homolog 1">
    <location>
        <begin position="1"/>
        <end position="424"/>
    </location>
</feature>
<feature type="region of interest" description="Disordered" evidence="4">
    <location>
        <begin position="19"/>
        <end position="47"/>
    </location>
</feature>
<feature type="compositionally biased region" description="Low complexity" evidence="4">
    <location>
        <begin position="37"/>
        <end position="47"/>
    </location>
</feature>
<name>TUB1_CAEBR</name>